<protein>
    <recommendedName>
        <fullName>Histone H1t</fullName>
    </recommendedName>
</protein>
<accession>P06349</accession>
<keyword id="KW-0158">Chromosome</keyword>
<keyword id="KW-0164">Citrullination</keyword>
<keyword id="KW-0217">Developmental protein</keyword>
<keyword id="KW-0221">Differentiation</keyword>
<keyword id="KW-0903">Direct protein sequencing</keyword>
<keyword id="KW-0238">DNA-binding</keyword>
<keyword id="KW-0539">Nucleus</keyword>
<keyword id="KW-0597">Phosphoprotein</keyword>
<keyword id="KW-1185">Reference proteome</keyword>
<keyword id="KW-0744">Spermatogenesis</keyword>
<reference key="1">
    <citation type="journal article" date="1986" name="J. Biol. Chem.">
        <title>Isolation of the gene for the testis-specific H1 histone variant H1t.</title>
        <authorList>
            <person name="Cole K.D."/>
            <person name="Kandala J.C."/>
            <person name="Kistler W.S."/>
        </authorList>
    </citation>
    <scope>NUCLEOTIDE SEQUENCE [GENOMIC DNA]</scope>
    <scope>TISSUE SPECIFICITY</scope>
</reference>
<reference key="2">
    <citation type="journal article" date="1991" name="J. Biol. Chem.">
        <title>Protein-DNA interactions within the rat histone H4t promoter.</title>
        <authorList>
            <person name="Wolfe S.A."/>
            <person name="Grimes S.R."/>
        </authorList>
    </citation>
    <scope>NUCLEOTIDE SEQUENCE [GENOMIC DNA]</scope>
    <scope>TISSUE SPECIFICITY</scope>
    <scope>DEVELOPMENTAL STAGE</scope>
</reference>
<reference key="3">
    <citation type="journal article" date="1986" name="Biochim. Biophys. Acta">
        <title>Sequence of the amino terminal half of rat testis-specific histone variant H1t.</title>
        <authorList>
            <person name="Cole K.D."/>
            <person name="York R.G."/>
            <person name="Kistler W.S."/>
        </authorList>
    </citation>
    <scope>PROTEIN SEQUENCE OF 2-109</scope>
</reference>
<reference key="4">
    <citation type="journal article" date="2006" name="FEBS Lett.">
        <title>A K52Q substitution in the globular domain of histone H1t modulates its nucleosome binding properties.</title>
        <authorList>
            <person name="Ramesh S."/>
            <person name="Bharath M.M."/>
            <person name="Chandra N.R."/>
            <person name="Rao M.R."/>
        </authorList>
    </citation>
    <scope>MUTAGENESIS OF GLN-54</scope>
</reference>
<reference key="5">
    <citation type="journal article" date="2009" name="J. Biol. Chem.">
        <title>Testis-specific linker histone H1t is multiply phosphorylated during spermatogenesis. Identification of phosphorylation sites.</title>
        <authorList>
            <person name="Sarg B."/>
            <person name="Chwatal S."/>
            <person name="Talasz H."/>
            <person name="Lindner H.H."/>
        </authorList>
    </citation>
    <scope>PHOSPHORYLATION AT SER-9; SER-141; THR-156; SER-178 AND SER-187</scope>
</reference>
<reference key="6">
    <citation type="journal article" date="2012" name="Nat. Commun.">
        <title>Quantitative maps of protein phosphorylation sites across 14 different rat organs and tissues.</title>
        <authorList>
            <person name="Lundby A."/>
            <person name="Secher A."/>
            <person name="Lage K."/>
            <person name="Nordsborg N.B."/>
            <person name="Dmytriyev A."/>
            <person name="Lundby C."/>
            <person name="Olsen J.V."/>
        </authorList>
    </citation>
    <scope>IDENTIFICATION BY MASS SPECTROMETRY [LARGE SCALE ANALYSIS]</scope>
</reference>
<dbReference type="EMBL" id="M13170">
    <property type="protein sequence ID" value="AAA41328.1"/>
    <property type="molecule type" value="Genomic_DNA"/>
</dbReference>
<dbReference type="EMBL" id="M28409">
    <property type="protein sequence ID" value="AAA41305.1"/>
    <property type="molecule type" value="Genomic_DNA"/>
</dbReference>
<dbReference type="PIR" id="A27779">
    <property type="entry name" value="HSRT1T"/>
</dbReference>
<dbReference type="RefSeq" id="NP_036711.1">
    <property type="nucleotide sequence ID" value="NM_012579.1"/>
</dbReference>
<dbReference type="SMR" id="P06349"/>
<dbReference type="BioGRID" id="246603">
    <property type="interactions" value="2"/>
</dbReference>
<dbReference type="FunCoup" id="P06349">
    <property type="interactions" value="82"/>
</dbReference>
<dbReference type="STRING" id="10116.ENSRNOP00000070024"/>
<dbReference type="iPTMnet" id="P06349"/>
<dbReference type="PhosphoSitePlus" id="P06349"/>
<dbReference type="Ensembl" id="ENSRNOT00000081345.2">
    <property type="protein sequence ID" value="ENSRNOP00000070024.1"/>
    <property type="gene ID" value="ENSRNOG00000061863.2"/>
</dbReference>
<dbReference type="GeneID" id="24438"/>
<dbReference type="KEGG" id="rno:24438"/>
<dbReference type="UCSC" id="RGD:2778">
    <property type="organism name" value="rat"/>
</dbReference>
<dbReference type="AGR" id="RGD:2778"/>
<dbReference type="CTD" id="107970"/>
<dbReference type="RGD" id="2778">
    <property type="gene designation" value="H1f6"/>
</dbReference>
<dbReference type="GeneTree" id="ENSGT00940000163525"/>
<dbReference type="HOGENOM" id="CLU_052897_7_0_1"/>
<dbReference type="InParanoid" id="P06349"/>
<dbReference type="OrthoDB" id="9634976at2759"/>
<dbReference type="PhylomeDB" id="P06349"/>
<dbReference type="TreeFam" id="TF313664"/>
<dbReference type="PRO" id="PR:P06349"/>
<dbReference type="Proteomes" id="UP000002494">
    <property type="component" value="Chromosome 17"/>
</dbReference>
<dbReference type="Bgee" id="ENSRNOG00000061863">
    <property type="expression patterns" value="Expressed in testis and 11 other cell types or tissues"/>
</dbReference>
<dbReference type="GO" id="GO:0000794">
    <property type="term" value="C:condensed nuclear chromosome"/>
    <property type="evidence" value="ECO:0000266"/>
    <property type="project" value="RGD"/>
</dbReference>
<dbReference type="GO" id="GO:0000786">
    <property type="term" value="C:nucleosome"/>
    <property type="evidence" value="ECO:0007669"/>
    <property type="project" value="InterPro"/>
</dbReference>
<dbReference type="GO" id="GO:0005634">
    <property type="term" value="C:nucleus"/>
    <property type="evidence" value="ECO:0000318"/>
    <property type="project" value="GO_Central"/>
</dbReference>
<dbReference type="GO" id="GO:0003677">
    <property type="term" value="F:DNA binding"/>
    <property type="evidence" value="ECO:0000266"/>
    <property type="project" value="RGD"/>
</dbReference>
<dbReference type="GO" id="GO:0003690">
    <property type="term" value="F:double-stranded DNA binding"/>
    <property type="evidence" value="ECO:0000266"/>
    <property type="project" value="RGD"/>
</dbReference>
<dbReference type="GO" id="GO:0031492">
    <property type="term" value="F:nucleosomal DNA binding"/>
    <property type="evidence" value="ECO:0000318"/>
    <property type="project" value="GO_Central"/>
</dbReference>
<dbReference type="GO" id="GO:0030527">
    <property type="term" value="F:structural constituent of chromatin"/>
    <property type="evidence" value="ECO:0007669"/>
    <property type="project" value="InterPro"/>
</dbReference>
<dbReference type="GO" id="GO:0007339">
    <property type="term" value="P:binding of sperm to zona pellucida"/>
    <property type="evidence" value="ECO:0000266"/>
    <property type="project" value="RGD"/>
</dbReference>
<dbReference type="GO" id="GO:0030154">
    <property type="term" value="P:cell differentiation"/>
    <property type="evidence" value="ECO:0007669"/>
    <property type="project" value="UniProtKB-KW"/>
</dbReference>
<dbReference type="GO" id="GO:0030261">
    <property type="term" value="P:chromosome condensation"/>
    <property type="evidence" value="ECO:0000318"/>
    <property type="project" value="GO_Central"/>
</dbReference>
<dbReference type="GO" id="GO:0030317">
    <property type="term" value="P:flagellated sperm motility"/>
    <property type="evidence" value="ECO:0000266"/>
    <property type="project" value="RGD"/>
</dbReference>
<dbReference type="GO" id="GO:0045910">
    <property type="term" value="P:negative regulation of DNA recombination"/>
    <property type="evidence" value="ECO:0000318"/>
    <property type="project" value="GO_Central"/>
</dbReference>
<dbReference type="GO" id="GO:0006334">
    <property type="term" value="P:nucleosome assembly"/>
    <property type="evidence" value="ECO:0007669"/>
    <property type="project" value="InterPro"/>
</dbReference>
<dbReference type="GO" id="GO:0007283">
    <property type="term" value="P:spermatogenesis"/>
    <property type="evidence" value="ECO:0000270"/>
    <property type="project" value="RGD"/>
</dbReference>
<dbReference type="CDD" id="cd00073">
    <property type="entry name" value="H15"/>
    <property type="match status" value="1"/>
</dbReference>
<dbReference type="FunFam" id="1.10.10.10:FF:000075">
    <property type="entry name" value="Histone H1 like"/>
    <property type="match status" value="1"/>
</dbReference>
<dbReference type="Gene3D" id="1.10.10.10">
    <property type="entry name" value="Winged helix-like DNA-binding domain superfamily/Winged helix DNA-binding domain"/>
    <property type="match status" value="1"/>
</dbReference>
<dbReference type="InterPro" id="IPR005819">
    <property type="entry name" value="H1/H5"/>
</dbReference>
<dbReference type="InterPro" id="IPR005818">
    <property type="entry name" value="Histone_H1/H5_H15"/>
</dbReference>
<dbReference type="InterPro" id="IPR036388">
    <property type="entry name" value="WH-like_DNA-bd_sf"/>
</dbReference>
<dbReference type="InterPro" id="IPR036390">
    <property type="entry name" value="WH_DNA-bd_sf"/>
</dbReference>
<dbReference type="Pfam" id="PF00538">
    <property type="entry name" value="Linker_histone"/>
    <property type="match status" value="1"/>
</dbReference>
<dbReference type="PRINTS" id="PR00624">
    <property type="entry name" value="HISTONEH5"/>
</dbReference>
<dbReference type="SMART" id="SM00526">
    <property type="entry name" value="H15"/>
    <property type="match status" value="1"/>
</dbReference>
<dbReference type="SUPFAM" id="SSF46785">
    <property type="entry name" value="Winged helix' DNA-binding domain"/>
    <property type="match status" value="1"/>
</dbReference>
<dbReference type="PROSITE" id="PS51504">
    <property type="entry name" value="H15"/>
    <property type="match status" value="1"/>
</dbReference>
<comment type="function">
    <text evidence="1">Testis-specific histone H1 that forms less compacted chromatin compared to other H1 histone subtypes. Formation of more relaxed chromatin may be required to promote chromatin architecture required for proper chromosome regulation during meiosis, such as homologous recombination. Histones H1 act as linkers that bind to nucleosomes and compact polynucleosomes into a higher-order chromatin configuration.</text>
</comment>
<comment type="subcellular location">
    <subcellularLocation>
        <location evidence="11">Nucleus</location>
    </subcellularLocation>
    <subcellularLocation>
        <location evidence="11">Chromosome</location>
    </subcellularLocation>
</comment>
<comment type="tissue specificity">
    <text evidence="7 9">Testis-specific (PubMed:1706721, PubMed:2423516). Expressed in pachytene spermatocytes during meiotic prophase I (PubMed:1706721).</text>
</comment>
<comment type="developmental stage">
    <text evidence="7">This histone is a testis-specific H1 variant that appears during meiosis in spermatogenesis.</text>
</comment>
<comment type="domain">
    <text evidence="6">The Gln-54 residue in the globular domain forms a hydrogen bond with the main chain carbonyl of Met-52 and is spatially oriented away from the nucleosome dyad axis, leading to lower affinity towards Four-way junction DNA and reconstituted 5S mononucleosomes.</text>
</comment>
<comment type="PTM">
    <text evidence="8">Phosphorylated in early spermatids.</text>
</comment>
<comment type="PTM">
    <text evidence="2">Citrullination at Arg-56 (H1R54ci) by PADI4 takes place within the DNA-binding site of H1 and results in its displacement from chromatin and global chromatin decondensation, thereby promoting pluripotency and stem cell maintenance.</text>
</comment>
<comment type="similarity">
    <text evidence="4">Belongs to the histone H1/H5 family.</text>
</comment>
<organism>
    <name type="scientific">Rattus norvegicus</name>
    <name type="common">Rat</name>
    <dbReference type="NCBI Taxonomy" id="10116"/>
    <lineage>
        <taxon>Eukaryota</taxon>
        <taxon>Metazoa</taxon>
        <taxon>Chordata</taxon>
        <taxon>Craniata</taxon>
        <taxon>Vertebrata</taxon>
        <taxon>Euteleostomi</taxon>
        <taxon>Mammalia</taxon>
        <taxon>Eutheria</taxon>
        <taxon>Euarchontoglires</taxon>
        <taxon>Glires</taxon>
        <taxon>Rodentia</taxon>
        <taxon>Myomorpha</taxon>
        <taxon>Muroidea</taxon>
        <taxon>Muridae</taxon>
        <taxon>Murinae</taxon>
        <taxon>Rattus</taxon>
    </lineage>
</organism>
<sequence length="208" mass="21726">MSETAPAASSTLVPAPVEKPATKRRGKKPGMATARKPRGFSVSKLIPEALSMSQERAGMSLAALKKALAAAGYDVEKNNSRIKLALKRLVNKGVLVQTKGTGASGSFKLSKKAASGNDKGKGKKSASAKAKKLGLSRASRSPKSSKTKVVKKPKATPTKGSGSRRKTKGAKGLQQRKSPAKARATNSNSGKSKMVMQKTDLRKAAGRK</sequence>
<name>H1T_RAT</name>
<proteinExistence type="evidence at protein level"/>
<feature type="initiator methionine" description="Removed" evidence="10">
    <location>
        <position position="1"/>
    </location>
</feature>
<feature type="chain" id="PRO_0000195925" description="Histone H1t">
    <location>
        <begin position="2"/>
        <end position="208"/>
    </location>
</feature>
<feature type="domain" description="H15" evidence="4">
    <location>
        <begin position="38"/>
        <end position="111"/>
    </location>
</feature>
<feature type="region of interest" description="Disordered" evidence="5">
    <location>
        <begin position="1"/>
        <end position="39"/>
    </location>
</feature>
<feature type="region of interest" description="Disordered" evidence="5">
    <location>
        <begin position="93"/>
        <end position="208"/>
    </location>
</feature>
<feature type="compositionally biased region" description="Polar residues" evidence="5">
    <location>
        <begin position="1"/>
        <end position="12"/>
    </location>
</feature>
<feature type="compositionally biased region" description="Basic residues" evidence="5">
    <location>
        <begin position="121"/>
        <end position="134"/>
    </location>
</feature>
<feature type="compositionally biased region" description="Basic residues" evidence="5">
    <location>
        <begin position="143"/>
        <end position="154"/>
    </location>
</feature>
<feature type="compositionally biased region" description="Basic and acidic residues" evidence="5">
    <location>
        <begin position="199"/>
        <end position="208"/>
    </location>
</feature>
<feature type="site" description="Important for nucleosome binding properties" evidence="6">
    <location>
        <position position="54"/>
    </location>
</feature>
<feature type="modified residue" description="Phosphoserine" evidence="8">
    <location>
        <position position="9"/>
    </location>
</feature>
<feature type="modified residue" description="Citrulline" evidence="2">
    <location>
        <position position="56"/>
    </location>
</feature>
<feature type="modified residue" description="Phosphoserine" evidence="8">
    <location>
        <position position="141"/>
    </location>
</feature>
<feature type="modified residue" description="Phosphothreonine" evidence="8">
    <location>
        <position position="156"/>
    </location>
</feature>
<feature type="modified residue" description="Phosphoserine" evidence="3">
    <location>
        <position position="163"/>
    </location>
</feature>
<feature type="modified residue" description="Phosphoserine" evidence="8">
    <location>
        <position position="178"/>
    </location>
</feature>
<feature type="modified residue" description="Phosphoserine" evidence="8">
    <location>
        <position position="187"/>
    </location>
</feature>
<feature type="mutagenesis site" description="Increased affinity for DNA." evidence="6">
    <original>Q</original>
    <variation>K</variation>
    <location>
        <position position="54"/>
    </location>
</feature>
<evidence type="ECO:0000250" key="1">
    <source>
        <dbReference type="UniProtKB" id="P22492"/>
    </source>
</evidence>
<evidence type="ECO:0000250" key="2">
    <source>
        <dbReference type="UniProtKB" id="P43275"/>
    </source>
</evidence>
<evidence type="ECO:0000250" key="3">
    <source>
        <dbReference type="UniProtKB" id="Q07133"/>
    </source>
</evidence>
<evidence type="ECO:0000255" key="4">
    <source>
        <dbReference type="PROSITE-ProRule" id="PRU00837"/>
    </source>
</evidence>
<evidence type="ECO:0000256" key="5">
    <source>
        <dbReference type="SAM" id="MobiDB-lite"/>
    </source>
</evidence>
<evidence type="ECO:0000269" key="6">
    <source>
    </source>
</evidence>
<evidence type="ECO:0000269" key="7">
    <source>
    </source>
</evidence>
<evidence type="ECO:0000269" key="8">
    <source>
    </source>
</evidence>
<evidence type="ECO:0000269" key="9">
    <source>
    </source>
</evidence>
<evidence type="ECO:0000269" key="10">
    <source>
    </source>
</evidence>
<evidence type="ECO:0000305" key="11"/>
<evidence type="ECO:0000312" key="12">
    <source>
        <dbReference type="RGD" id="2778"/>
    </source>
</evidence>
<gene>
    <name evidence="1" type="primary">H1-6</name>
    <name evidence="12" type="synonym">H1f6</name>
    <name type="synonym">H1ft</name>
    <name type="synonym">H1t</name>
</gene>